<organismHost>
    <name type="scientific">Lepidoptera</name>
    <name type="common">butterflies and moths</name>
    <dbReference type="NCBI Taxonomy" id="7088"/>
</organismHost>
<proteinExistence type="inferred from homology"/>
<dbReference type="EMBL" id="L22858">
    <property type="protein sequence ID" value="AAA66662.1"/>
    <property type="molecule type" value="Genomic_DNA"/>
</dbReference>
<dbReference type="PIR" id="H72853">
    <property type="entry name" value="H72853"/>
</dbReference>
<dbReference type="SMR" id="P41444"/>
<dbReference type="KEGG" id="vg:1403864"/>
<dbReference type="OrthoDB" id="14030at10239"/>
<dbReference type="Proteomes" id="UP000008292">
    <property type="component" value="Segment"/>
</dbReference>
<dbReference type="GO" id="GO:0008083">
    <property type="term" value="F:growth factor activity"/>
    <property type="evidence" value="ECO:0007669"/>
    <property type="project" value="UniProtKB-KW"/>
</dbReference>
<dbReference type="CDD" id="cd23311">
    <property type="entry name" value="beta-trefoil_FGF_Bnl-like"/>
    <property type="match status" value="1"/>
</dbReference>
<dbReference type="Gene3D" id="2.80.10.50">
    <property type="match status" value="1"/>
</dbReference>
<dbReference type="InterPro" id="IPR002209">
    <property type="entry name" value="Fibroblast_GF_fam"/>
</dbReference>
<dbReference type="InterPro" id="IPR008996">
    <property type="entry name" value="IL1/FGF"/>
</dbReference>
<dbReference type="PANTHER" id="PTHR11486">
    <property type="entry name" value="FIBROBLAST GROWTH FACTOR"/>
    <property type="match status" value="1"/>
</dbReference>
<dbReference type="Pfam" id="PF00167">
    <property type="entry name" value="FGF"/>
    <property type="match status" value="1"/>
</dbReference>
<dbReference type="PRINTS" id="PR00263">
    <property type="entry name" value="HBGFFGF"/>
</dbReference>
<dbReference type="SMART" id="SM00442">
    <property type="entry name" value="FGF"/>
    <property type="match status" value="1"/>
</dbReference>
<dbReference type="SUPFAM" id="SSF50353">
    <property type="entry name" value="Cytokine"/>
    <property type="match status" value="1"/>
</dbReference>
<dbReference type="PROSITE" id="PS00247">
    <property type="entry name" value="HBGF_FGF"/>
    <property type="match status" value="1"/>
</dbReference>
<protein>
    <recommendedName>
        <fullName>Fibroblast growth factor homolog</fullName>
    </recommendedName>
</protein>
<reference key="1">
    <citation type="journal article" date="1994" name="Virology">
        <title>The complete DNA sequence of Autographa californica nuclear polyhedrosis virus.</title>
        <authorList>
            <person name="Ayres M.D."/>
            <person name="Howard S.C."/>
            <person name="Kuzio J."/>
            <person name="Lopez-Ferber M."/>
            <person name="Possee R.D."/>
        </authorList>
    </citation>
    <scope>NUCLEOTIDE SEQUENCE [LARGE SCALE GENOMIC DNA]</scope>
    <source>
        <strain>C6</strain>
    </source>
</reference>
<name>FGFH_NPVAC</name>
<organism>
    <name type="scientific">Autographa californica nuclear polyhedrosis virus</name>
    <name type="common">AcMNPV</name>
    <dbReference type="NCBI Taxonomy" id="46015"/>
    <lineage>
        <taxon>Viruses</taxon>
        <taxon>Viruses incertae sedis</taxon>
        <taxon>Naldaviricetes</taxon>
        <taxon>Lefavirales</taxon>
        <taxon>Baculoviridae</taxon>
        <taxon>Alphabaculovirus</taxon>
        <taxon>Alphabaculovirus aucalifornicae</taxon>
    </lineage>
</organism>
<evidence type="ECO:0000255" key="1"/>
<evidence type="ECO:0000305" key="2"/>
<gene>
    <name type="primary">FGF</name>
</gene>
<keyword id="KW-0339">Growth factor</keyword>
<keyword id="KW-1185">Reference proteome</keyword>
<keyword id="KW-0732">Signal</keyword>
<sequence length="181" mass="20619">MYRLLALVALASMADCSALLTHITGTSIPGQLFINRQFLAVNPDGAVYGTIESDNVDTIFKRVAVDRNRIVIQNAITCVYLCMDRCGQLYGSKTLSKDCFMREFLEKNNYNTYYKVYDRKLTYVALKNDGTPRKLQISKSRKLGKLSVYAMALLKRLSFPIYTSCPNIKSEIIVRHRKCHV</sequence>
<accession>P41444</accession>
<comment type="similarity">
    <text evidence="2">Belongs to the heparin-binding growth factors family.</text>
</comment>
<feature type="signal peptide" evidence="1">
    <location>
        <begin position="1"/>
        <end position="16"/>
    </location>
</feature>
<feature type="chain" id="PRO_0000009001" description="Fibroblast growth factor homolog">
    <location>
        <begin position="17"/>
        <end position="181"/>
    </location>
</feature>